<evidence type="ECO:0000255" key="1">
    <source>
        <dbReference type="HAMAP-Rule" id="MF_00743"/>
    </source>
</evidence>
<evidence type="ECO:0000269" key="2">
    <source ref="3"/>
</evidence>
<evidence type="ECO:0000305" key="3"/>
<evidence type="ECO:0007829" key="4">
    <source>
        <dbReference type="PDB" id="4HGV"/>
    </source>
</evidence>
<gene>
    <name evidence="1" type="primary">fumC</name>
    <name type="ordered locus">R01859</name>
    <name type="ORF">SMc00149</name>
</gene>
<protein>
    <recommendedName>
        <fullName evidence="1">Fumarate hydratase class II</fullName>
        <shortName evidence="1">Fumarase C</shortName>
        <ecNumber evidence="1">4.2.1.2</ecNumber>
    </recommendedName>
    <alternativeName>
        <fullName evidence="1">Aerobic fumarase</fullName>
    </alternativeName>
    <alternativeName>
        <fullName evidence="1">Iron-independent fumarase</fullName>
    </alternativeName>
</protein>
<name>FUMC_RHIME</name>
<proteinExistence type="evidence at protein level"/>
<feature type="chain" id="PRO_0000161305" description="Fumarate hydratase class II">
    <location>
        <begin position="1"/>
        <end position="463"/>
    </location>
</feature>
<feature type="active site" description="Proton donor/acceptor" evidence="1">
    <location>
        <position position="188"/>
    </location>
</feature>
<feature type="active site" evidence="1">
    <location>
        <position position="318"/>
    </location>
</feature>
<feature type="binding site" evidence="1">
    <location>
        <begin position="98"/>
        <end position="100"/>
    </location>
    <ligand>
        <name>substrate</name>
    </ligand>
</feature>
<feature type="binding site" description="in site B" evidence="1">
    <location>
        <begin position="129"/>
        <end position="132"/>
    </location>
    <ligand>
        <name>substrate</name>
    </ligand>
</feature>
<feature type="binding site" evidence="1">
    <location>
        <begin position="139"/>
        <end position="141"/>
    </location>
    <ligand>
        <name>substrate</name>
    </ligand>
</feature>
<feature type="binding site" evidence="1">
    <location>
        <position position="187"/>
    </location>
    <ligand>
        <name>substrate</name>
    </ligand>
</feature>
<feature type="binding site" evidence="1">
    <location>
        <position position="319"/>
    </location>
    <ligand>
        <name>substrate</name>
    </ligand>
</feature>
<feature type="binding site" evidence="1">
    <location>
        <begin position="324"/>
        <end position="326"/>
    </location>
    <ligand>
        <name>substrate</name>
    </ligand>
</feature>
<feature type="site" description="Important for catalytic activity" evidence="1">
    <location>
        <position position="331"/>
    </location>
</feature>
<feature type="strand" evidence="4">
    <location>
        <begin position="4"/>
        <end position="9"/>
    </location>
</feature>
<feature type="strand" evidence="4">
    <location>
        <begin position="12"/>
        <end position="17"/>
    </location>
</feature>
<feature type="helix" evidence="4">
    <location>
        <begin position="24"/>
        <end position="32"/>
    </location>
</feature>
<feature type="helix" evidence="4">
    <location>
        <begin position="42"/>
        <end position="61"/>
    </location>
</feature>
<feature type="helix" evidence="4">
    <location>
        <begin position="67"/>
        <end position="81"/>
    </location>
</feature>
<feature type="helix" evidence="4">
    <location>
        <begin position="86"/>
        <end position="88"/>
    </location>
</feature>
<feature type="strand" evidence="4">
    <location>
        <begin position="92"/>
        <end position="95"/>
    </location>
</feature>
<feature type="helix" evidence="4">
    <location>
        <begin position="100"/>
        <end position="117"/>
    </location>
</feature>
<feature type="turn" evidence="4">
    <location>
        <begin position="122"/>
        <end position="125"/>
    </location>
</feature>
<feature type="helix" evidence="4">
    <location>
        <begin position="130"/>
        <end position="134"/>
    </location>
</feature>
<feature type="turn" evidence="4">
    <location>
        <begin position="135"/>
        <end position="137"/>
    </location>
</feature>
<feature type="helix" evidence="4">
    <location>
        <begin position="140"/>
        <end position="158"/>
    </location>
</feature>
<feature type="helix" evidence="4">
    <location>
        <begin position="160"/>
        <end position="178"/>
    </location>
</feature>
<feature type="strand" evidence="4">
    <location>
        <begin position="182"/>
        <end position="187"/>
    </location>
</feature>
<feature type="strand" evidence="4">
    <location>
        <begin position="190"/>
        <end position="196"/>
    </location>
</feature>
<feature type="helix" evidence="4">
    <location>
        <begin position="197"/>
        <end position="217"/>
    </location>
</feature>
<feature type="helix" evidence="4">
    <location>
        <begin position="219"/>
        <end position="222"/>
    </location>
</feature>
<feature type="turn" evidence="4">
    <location>
        <begin position="230"/>
        <end position="232"/>
    </location>
</feature>
<feature type="helix" evidence="4">
    <location>
        <begin position="242"/>
        <end position="254"/>
    </location>
</feature>
<feature type="helix" evidence="4">
    <location>
        <begin position="264"/>
        <end position="269"/>
    </location>
</feature>
<feature type="helix" evidence="4">
    <location>
        <begin position="272"/>
        <end position="298"/>
    </location>
</feature>
<feature type="strand" evidence="4">
    <location>
        <begin position="302"/>
        <end position="305"/>
    </location>
</feature>
<feature type="helix" evidence="4">
    <location>
        <begin position="328"/>
        <end position="352"/>
    </location>
</feature>
<feature type="helix" evidence="4">
    <location>
        <begin position="362"/>
        <end position="386"/>
    </location>
</feature>
<feature type="helix" evidence="4">
    <location>
        <begin position="388"/>
        <end position="390"/>
    </location>
</feature>
<feature type="helix" evidence="4">
    <location>
        <begin position="395"/>
        <end position="404"/>
    </location>
</feature>
<feature type="helix" evidence="4">
    <location>
        <begin position="407"/>
        <end position="411"/>
    </location>
</feature>
<feature type="helix" evidence="4">
    <location>
        <begin position="413"/>
        <end position="416"/>
    </location>
</feature>
<feature type="helix" evidence="4">
    <location>
        <begin position="418"/>
        <end position="431"/>
    </location>
</feature>
<feature type="helix" evidence="4">
    <location>
        <begin position="435"/>
        <end position="440"/>
    </location>
</feature>
<feature type="turn" evidence="4">
    <location>
        <begin position="441"/>
        <end position="443"/>
    </location>
</feature>
<feature type="helix" evidence="4">
    <location>
        <begin position="447"/>
        <end position="453"/>
    </location>
</feature>
<feature type="helix" evidence="4">
    <location>
        <begin position="456"/>
        <end position="458"/>
    </location>
</feature>
<feature type="strand" evidence="4">
    <location>
        <begin position="459"/>
        <end position="461"/>
    </location>
</feature>
<organism>
    <name type="scientific">Rhizobium meliloti (strain 1021)</name>
    <name type="common">Ensifer meliloti</name>
    <name type="synonym">Sinorhizobium meliloti</name>
    <dbReference type="NCBI Taxonomy" id="266834"/>
    <lineage>
        <taxon>Bacteria</taxon>
        <taxon>Pseudomonadati</taxon>
        <taxon>Pseudomonadota</taxon>
        <taxon>Alphaproteobacteria</taxon>
        <taxon>Hyphomicrobiales</taxon>
        <taxon>Rhizobiaceae</taxon>
        <taxon>Sinorhizobium/Ensifer group</taxon>
        <taxon>Sinorhizobium</taxon>
    </lineage>
</organism>
<comment type="function">
    <text evidence="1">Involved in the TCA cycle. Catalyzes the stereospecific interconversion of fumarate to L-malate.</text>
</comment>
<comment type="catalytic activity">
    <reaction evidence="1">
        <text>(S)-malate = fumarate + H2O</text>
        <dbReference type="Rhea" id="RHEA:12460"/>
        <dbReference type="ChEBI" id="CHEBI:15377"/>
        <dbReference type="ChEBI" id="CHEBI:15589"/>
        <dbReference type="ChEBI" id="CHEBI:29806"/>
        <dbReference type="EC" id="4.2.1.2"/>
    </reaction>
</comment>
<comment type="pathway">
    <text evidence="1">Carbohydrate metabolism; tricarboxylic acid cycle; (S)-malate from fumarate: step 1/1.</text>
</comment>
<comment type="subunit">
    <text evidence="1 2">Homotetramer.</text>
</comment>
<comment type="subcellular location">
    <subcellularLocation>
        <location evidence="1">Cytoplasm</location>
    </subcellularLocation>
</comment>
<comment type="miscellaneous">
    <text evidence="1">There are 2 substrate-binding sites: the catalytic A site, and the non-catalytic B site that may play a role in the transfer of substrate or product between the active site and the solvent. Alternatively, the B site may bind allosteric effectors.</text>
</comment>
<comment type="similarity">
    <text evidence="1 3">Belongs to the class-II fumarase/aspartase family. Fumarase subfamily.</text>
</comment>
<comment type="sequence caution" evidence="3">
    <conflict type="erroneous initiation">
        <sequence resource="EMBL-CDS" id="CAC46438"/>
    </conflict>
    <text>Extended N-terminus.</text>
</comment>
<sequence length="463" mass="49133">MTSTRTETDTFGPIEVASDRYWGAQAQRSLGNFKIGWEKQPLAIVRALGIVKQAAARANMALGRLDPAIGDAIVKAAQEVIDGKLDEHFPLVVWQTGSGTQSNMNANEVVSNRAIELLGGVMGSKKPVHPNDHVNMSQSSNDTYPTAMHIACAERVIHDLLPALKHLHKALEEKVKAFDHIIKIGRTHTQDATPLTLGQEFSGYAAQVASSIKRIEMTLPGLCELAQGGTAVGTGLNAPVGFAEKVAEEIAAITGIGFTSAPNKFEALAAHDSMVFSHGAINATAAALFKIANDIRFLGSGPRSGLGELSLPENEPGSSIMPGKVNPTQCEALTQVCVQVFGNHAALTFAGSQGHFELNVYNPLMAYNFLQSVQLLADAAISFTDNCVVGIEAREDNIKAALDRSLMLVTALAPKIGYDNAAKIAKTAHKNGTTLREEAVGGGYVTDEEFDAVVRPETMIGPA</sequence>
<accession>Q92PB6</accession>
<dbReference type="EC" id="4.2.1.2" evidence="1"/>
<dbReference type="EMBL" id="AL591688">
    <property type="protein sequence ID" value="CAC46438.1"/>
    <property type="status" value="ALT_INIT"/>
    <property type="molecule type" value="Genomic_DNA"/>
</dbReference>
<dbReference type="RefSeq" id="NP_385965.3">
    <property type="nucleotide sequence ID" value="NC_003047.1"/>
</dbReference>
<dbReference type="PDB" id="4HGV">
    <property type="method" value="X-ray"/>
    <property type="resolution" value="2.09 A"/>
    <property type="chains" value="A/B/C/D=1-463"/>
</dbReference>
<dbReference type="PDBsum" id="4HGV"/>
<dbReference type="SMR" id="Q92PB6"/>
<dbReference type="EnsemblBacteria" id="CAC46438">
    <property type="protein sequence ID" value="CAC46438"/>
    <property type="gene ID" value="SMc00149"/>
</dbReference>
<dbReference type="KEGG" id="sme:SMc00149"/>
<dbReference type="PATRIC" id="fig|266834.11.peg.3302"/>
<dbReference type="eggNOG" id="COG0114">
    <property type="taxonomic scope" value="Bacteria"/>
</dbReference>
<dbReference type="OrthoDB" id="9802809at2"/>
<dbReference type="UniPathway" id="UPA00223">
    <property type="reaction ID" value="UER01007"/>
</dbReference>
<dbReference type="EvolutionaryTrace" id="Q92PB6"/>
<dbReference type="Proteomes" id="UP000001976">
    <property type="component" value="Chromosome"/>
</dbReference>
<dbReference type="GO" id="GO:0005737">
    <property type="term" value="C:cytoplasm"/>
    <property type="evidence" value="ECO:0007669"/>
    <property type="project" value="UniProtKB-SubCell"/>
</dbReference>
<dbReference type="GO" id="GO:0004333">
    <property type="term" value="F:fumarate hydratase activity"/>
    <property type="evidence" value="ECO:0007669"/>
    <property type="project" value="UniProtKB-UniRule"/>
</dbReference>
<dbReference type="GO" id="GO:0006106">
    <property type="term" value="P:fumarate metabolic process"/>
    <property type="evidence" value="ECO:0007669"/>
    <property type="project" value="InterPro"/>
</dbReference>
<dbReference type="GO" id="GO:0006108">
    <property type="term" value="P:malate metabolic process"/>
    <property type="evidence" value="ECO:0007669"/>
    <property type="project" value="TreeGrafter"/>
</dbReference>
<dbReference type="GO" id="GO:0006099">
    <property type="term" value="P:tricarboxylic acid cycle"/>
    <property type="evidence" value="ECO:0007669"/>
    <property type="project" value="UniProtKB-UniRule"/>
</dbReference>
<dbReference type="CDD" id="cd01362">
    <property type="entry name" value="Fumarase_classII"/>
    <property type="match status" value="1"/>
</dbReference>
<dbReference type="FunFam" id="1.10.40.30:FF:000002">
    <property type="entry name" value="Fumarate hydratase class II"/>
    <property type="match status" value="1"/>
</dbReference>
<dbReference type="FunFam" id="1.10.275.10:FF:000001">
    <property type="entry name" value="Fumarate hydratase, mitochondrial"/>
    <property type="match status" value="1"/>
</dbReference>
<dbReference type="FunFam" id="1.20.200.10:FF:000001">
    <property type="entry name" value="Fumarate hydratase, mitochondrial"/>
    <property type="match status" value="1"/>
</dbReference>
<dbReference type="Gene3D" id="1.10.40.30">
    <property type="entry name" value="Fumarase/aspartase (C-terminal domain)"/>
    <property type="match status" value="1"/>
</dbReference>
<dbReference type="Gene3D" id="1.20.200.10">
    <property type="entry name" value="Fumarase/aspartase (Central domain)"/>
    <property type="match status" value="1"/>
</dbReference>
<dbReference type="Gene3D" id="1.10.275.10">
    <property type="entry name" value="Fumarase/aspartase (N-terminal domain)"/>
    <property type="match status" value="1"/>
</dbReference>
<dbReference type="HAMAP" id="MF_00743">
    <property type="entry name" value="FumaraseC"/>
    <property type="match status" value="1"/>
</dbReference>
<dbReference type="InterPro" id="IPR005677">
    <property type="entry name" value="Fum_hydII"/>
</dbReference>
<dbReference type="InterPro" id="IPR024083">
    <property type="entry name" value="Fumarase/histidase_N"/>
</dbReference>
<dbReference type="InterPro" id="IPR018951">
    <property type="entry name" value="Fumarase_C_C"/>
</dbReference>
<dbReference type="InterPro" id="IPR020557">
    <property type="entry name" value="Fumarate_lyase_CS"/>
</dbReference>
<dbReference type="InterPro" id="IPR000362">
    <property type="entry name" value="Fumarate_lyase_fam"/>
</dbReference>
<dbReference type="InterPro" id="IPR022761">
    <property type="entry name" value="Fumarate_lyase_N"/>
</dbReference>
<dbReference type="InterPro" id="IPR008948">
    <property type="entry name" value="L-Aspartase-like"/>
</dbReference>
<dbReference type="NCBIfam" id="TIGR00979">
    <property type="entry name" value="fumC_II"/>
    <property type="match status" value="1"/>
</dbReference>
<dbReference type="NCBIfam" id="NF008909">
    <property type="entry name" value="PRK12273.1"/>
    <property type="match status" value="1"/>
</dbReference>
<dbReference type="PANTHER" id="PTHR11444">
    <property type="entry name" value="ASPARTATEAMMONIA/ARGININOSUCCINATE/ADENYLOSUCCINATE LYASE"/>
    <property type="match status" value="1"/>
</dbReference>
<dbReference type="PANTHER" id="PTHR11444:SF1">
    <property type="entry name" value="FUMARATE HYDRATASE, MITOCHONDRIAL"/>
    <property type="match status" value="1"/>
</dbReference>
<dbReference type="Pfam" id="PF10415">
    <property type="entry name" value="FumaraseC_C"/>
    <property type="match status" value="1"/>
</dbReference>
<dbReference type="Pfam" id="PF00206">
    <property type="entry name" value="Lyase_1"/>
    <property type="match status" value="1"/>
</dbReference>
<dbReference type="PRINTS" id="PR00149">
    <property type="entry name" value="FUMRATELYASE"/>
</dbReference>
<dbReference type="SUPFAM" id="SSF48557">
    <property type="entry name" value="L-aspartase-like"/>
    <property type="match status" value="1"/>
</dbReference>
<dbReference type="PROSITE" id="PS00163">
    <property type="entry name" value="FUMARATE_LYASES"/>
    <property type="match status" value="1"/>
</dbReference>
<reference key="1">
    <citation type="journal article" date="2001" name="Proc. Natl. Acad. Sci. U.S.A.">
        <title>Analysis of the chromosome sequence of the legume symbiont Sinorhizobium meliloti strain 1021.</title>
        <authorList>
            <person name="Capela D."/>
            <person name="Barloy-Hubler F."/>
            <person name="Gouzy J."/>
            <person name="Bothe G."/>
            <person name="Ampe F."/>
            <person name="Batut J."/>
            <person name="Boistard P."/>
            <person name="Becker A."/>
            <person name="Boutry M."/>
            <person name="Cadieu E."/>
            <person name="Dreano S."/>
            <person name="Gloux S."/>
            <person name="Godrie T."/>
            <person name="Goffeau A."/>
            <person name="Kahn D."/>
            <person name="Kiss E."/>
            <person name="Lelaure V."/>
            <person name="Masuy D."/>
            <person name="Pohl T."/>
            <person name="Portetelle D."/>
            <person name="Puehler A."/>
            <person name="Purnelle B."/>
            <person name="Ramsperger U."/>
            <person name="Renard C."/>
            <person name="Thebault P."/>
            <person name="Vandenbol M."/>
            <person name="Weidner S."/>
            <person name="Galibert F."/>
        </authorList>
    </citation>
    <scope>NUCLEOTIDE SEQUENCE [LARGE SCALE GENOMIC DNA]</scope>
    <source>
        <strain>1021</strain>
    </source>
</reference>
<reference key="2">
    <citation type="journal article" date="2001" name="Science">
        <title>The composite genome of the legume symbiont Sinorhizobium meliloti.</title>
        <authorList>
            <person name="Galibert F."/>
            <person name="Finan T.M."/>
            <person name="Long S.R."/>
            <person name="Puehler A."/>
            <person name="Abola P."/>
            <person name="Ampe F."/>
            <person name="Barloy-Hubler F."/>
            <person name="Barnett M.J."/>
            <person name="Becker A."/>
            <person name="Boistard P."/>
            <person name="Bothe G."/>
            <person name="Boutry M."/>
            <person name="Bowser L."/>
            <person name="Buhrmester J."/>
            <person name="Cadieu E."/>
            <person name="Capela D."/>
            <person name="Chain P."/>
            <person name="Cowie A."/>
            <person name="Davis R.W."/>
            <person name="Dreano S."/>
            <person name="Federspiel N.A."/>
            <person name="Fisher R.F."/>
            <person name="Gloux S."/>
            <person name="Godrie T."/>
            <person name="Goffeau A."/>
            <person name="Golding B."/>
            <person name="Gouzy J."/>
            <person name="Gurjal M."/>
            <person name="Hernandez-Lucas I."/>
            <person name="Hong A."/>
            <person name="Huizar L."/>
            <person name="Hyman R.W."/>
            <person name="Jones T."/>
            <person name="Kahn D."/>
            <person name="Kahn M.L."/>
            <person name="Kalman S."/>
            <person name="Keating D.H."/>
            <person name="Kiss E."/>
            <person name="Komp C."/>
            <person name="Lelaure V."/>
            <person name="Masuy D."/>
            <person name="Palm C."/>
            <person name="Peck M.C."/>
            <person name="Pohl T.M."/>
            <person name="Portetelle D."/>
            <person name="Purnelle B."/>
            <person name="Ramsperger U."/>
            <person name="Surzycki R."/>
            <person name="Thebault P."/>
            <person name="Vandenbol M."/>
            <person name="Vorhoelter F.J."/>
            <person name="Weidner S."/>
            <person name="Wells D.H."/>
            <person name="Wong K."/>
            <person name="Yeh K.-C."/>
            <person name="Batut J."/>
        </authorList>
    </citation>
    <scope>NUCLEOTIDE SEQUENCE [LARGE SCALE GENOMIC DNA]</scope>
    <source>
        <strain>1021</strain>
    </source>
</reference>
<reference key="3">
    <citation type="submission" date="2010-07" db="PDB data bank">
        <title>Crystal structure of a fumarate hydratase.</title>
        <authorList>
            <consortium name="New York structural genomics research consortium (NYSGRC)"/>
            <person name="Eswaramoorthy S."/>
            <person name="Evans B."/>
            <person name="Foti R."/>
            <person name="Gizzi A."/>
            <person name="Hillerich B."/>
            <person name="Kar A."/>
            <person name="Seidel J.L.R."/>
            <person name="Villigas G."/>
            <person name="Zencheck W."/>
            <person name="Almo S.C."/>
            <person name="Swaminathan S."/>
        </authorList>
    </citation>
    <scope>X-RAY CRYSTALLOGRAPHY (2.09 ANGSTROMS)</scope>
    <scope>SUBUNIT</scope>
</reference>
<keyword id="KW-0002">3D-structure</keyword>
<keyword id="KW-0963">Cytoplasm</keyword>
<keyword id="KW-0456">Lyase</keyword>
<keyword id="KW-1185">Reference proteome</keyword>
<keyword id="KW-0816">Tricarboxylic acid cycle</keyword>